<protein>
    <recommendedName>
        <fullName evidence="1">N-acetyl-gamma-glutamyl-phosphate reductase</fullName>
        <shortName evidence="1">AGPR</shortName>
        <ecNumber evidence="1">1.2.1.38</ecNumber>
    </recommendedName>
    <alternativeName>
        <fullName evidence="1">N-acetyl-glutamate semialdehyde dehydrogenase</fullName>
        <shortName evidence="1">NAGSA dehydrogenase</shortName>
    </alternativeName>
</protein>
<reference key="1">
    <citation type="journal article" date="2008" name="Genome Res.">
        <title>The genome of Pelotomaculum thermopropionicum reveals niche-associated evolution in anaerobic microbiota.</title>
        <authorList>
            <person name="Kosaka T."/>
            <person name="Kato S."/>
            <person name="Shimoyama T."/>
            <person name="Ishii S."/>
            <person name="Abe T."/>
            <person name="Watanabe K."/>
        </authorList>
    </citation>
    <scope>NUCLEOTIDE SEQUENCE [LARGE SCALE GENOMIC DNA]</scope>
    <source>
        <strain>DSM 13744 / JCM 10971 / SI</strain>
    </source>
</reference>
<dbReference type="EC" id="1.2.1.38" evidence="1"/>
<dbReference type="EMBL" id="AP009389">
    <property type="protein sequence ID" value="BAF58682.1"/>
    <property type="molecule type" value="Genomic_DNA"/>
</dbReference>
<dbReference type="SMR" id="A5D504"/>
<dbReference type="STRING" id="370438.PTH_0501"/>
<dbReference type="KEGG" id="pth:PTH_0501"/>
<dbReference type="eggNOG" id="COG0002">
    <property type="taxonomic scope" value="Bacteria"/>
</dbReference>
<dbReference type="HOGENOM" id="CLU_006384_0_1_9"/>
<dbReference type="UniPathway" id="UPA00068">
    <property type="reaction ID" value="UER00108"/>
</dbReference>
<dbReference type="Proteomes" id="UP000006556">
    <property type="component" value="Chromosome"/>
</dbReference>
<dbReference type="GO" id="GO:0005737">
    <property type="term" value="C:cytoplasm"/>
    <property type="evidence" value="ECO:0007669"/>
    <property type="project" value="UniProtKB-SubCell"/>
</dbReference>
<dbReference type="GO" id="GO:0003942">
    <property type="term" value="F:N-acetyl-gamma-glutamyl-phosphate reductase activity"/>
    <property type="evidence" value="ECO:0007669"/>
    <property type="project" value="UniProtKB-UniRule"/>
</dbReference>
<dbReference type="GO" id="GO:0051287">
    <property type="term" value="F:NAD binding"/>
    <property type="evidence" value="ECO:0007669"/>
    <property type="project" value="InterPro"/>
</dbReference>
<dbReference type="GO" id="GO:0070401">
    <property type="term" value="F:NADP+ binding"/>
    <property type="evidence" value="ECO:0007669"/>
    <property type="project" value="InterPro"/>
</dbReference>
<dbReference type="GO" id="GO:0006526">
    <property type="term" value="P:L-arginine biosynthetic process"/>
    <property type="evidence" value="ECO:0007669"/>
    <property type="project" value="UniProtKB-UniRule"/>
</dbReference>
<dbReference type="CDD" id="cd23934">
    <property type="entry name" value="AGPR_1_C"/>
    <property type="match status" value="1"/>
</dbReference>
<dbReference type="CDD" id="cd17895">
    <property type="entry name" value="AGPR_1_N"/>
    <property type="match status" value="1"/>
</dbReference>
<dbReference type="FunFam" id="3.30.360.10:FF:000014">
    <property type="entry name" value="N-acetyl-gamma-glutamyl-phosphate reductase"/>
    <property type="match status" value="1"/>
</dbReference>
<dbReference type="Gene3D" id="3.30.360.10">
    <property type="entry name" value="Dihydrodipicolinate Reductase, domain 2"/>
    <property type="match status" value="1"/>
</dbReference>
<dbReference type="Gene3D" id="3.40.50.720">
    <property type="entry name" value="NAD(P)-binding Rossmann-like Domain"/>
    <property type="match status" value="1"/>
</dbReference>
<dbReference type="HAMAP" id="MF_00150">
    <property type="entry name" value="ArgC_type1"/>
    <property type="match status" value="1"/>
</dbReference>
<dbReference type="InterPro" id="IPR023013">
    <property type="entry name" value="AGPR_AS"/>
</dbReference>
<dbReference type="InterPro" id="IPR000706">
    <property type="entry name" value="AGPR_type-1"/>
</dbReference>
<dbReference type="InterPro" id="IPR036291">
    <property type="entry name" value="NAD(P)-bd_dom_sf"/>
</dbReference>
<dbReference type="InterPro" id="IPR050085">
    <property type="entry name" value="NAGSA_dehydrogenase"/>
</dbReference>
<dbReference type="InterPro" id="IPR000534">
    <property type="entry name" value="Semialdehyde_DH_NAD-bd"/>
</dbReference>
<dbReference type="NCBIfam" id="TIGR01850">
    <property type="entry name" value="argC"/>
    <property type="match status" value="1"/>
</dbReference>
<dbReference type="PANTHER" id="PTHR32338:SF10">
    <property type="entry name" value="N-ACETYL-GAMMA-GLUTAMYL-PHOSPHATE REDUCTASE, CHLOROPLASTIC-RELATED"/>
    <property type="match status" value="1"/>
</dbReference>
<dbReference type="PANTHER" id="PTHR32338">
    <property type="entry name" value="N-ACETYL-GAMMA-GLUTAMYL-PHOSPHATE REDUCTASE, CHLOROPLASTIC-RELATED-RELATED"/>
    <property type="match status" value="1"/>
</dbReference>
<dbReference type="Pfam" id="PF01118">
    <property type="entry name" value="Semialdhyde_dh"/>
    <property type="match status" value="1"/>
</dbReference>
<dbReference type="Pfam" id="PF22698">
    <property type="entry name" value="Semialdhyde_dhC_1"/>
    <property type="match status" value="1"/>
</dbReference>
<dbReference type="SMART" id="SM00859">
    <property type="entry name" value="Semialdhyde_dh"/>
    <property type="match status" value="1"/>
</dbReference>
<dbReference type="SUPFAM" id="SSF55347">
    <property type="entry name" value="Glyceraldehyde-3-phosphate dehydrogenase-like, C-terminal domain"/>
    <property type="match status" value="1"/>
</dbReference>
<dbReference type="SUPFAM" id="SSF51735">
    <property type="entry name" value="NAD(P)-binding Rossmann-fold domains"/>
    <property type="match status" value="1"/>
</dbReference>
<dbReference type="PROSITE" id="PS01224">
    <property type="entry name" value="ARGC"/>
    <property type="match status" value="1"/>
</dbReference>
<accession>A5D504</accession>
<name>ARGC_PELTS</name>
<evidence type="ECO:0000255" key="1">
    <source>
        <dbReference type="HAMAP-Rule" id="MF_00150"/>
    </source>
</evidence>
<sequence>MAVKVSIIGATGYTGAELVRILSRHPQAELVALTTQSYAGKKFWEVYPHLYGYNQLTCEEMNLPEIMESSDIVFVALPHGHAMPAAREAARRGRKLIDLGADFRLKDFRTYEQWYRVEHTARELLAGAVYGLPEVNRREIREAWLVANPGCYPTSAILALAPLLKNRLIDTSSIIIDSKSGVSGAGRGLALGSHFSEVNENFKAYNVAVHRHTPEIEQELGRIAGEDVAVTFTPHLLPVTRGILSTVYAKLAAPAGEEEIREVYLDYYRGEPFVRVLPAGMLPQIKWVAGTNHCDIGLTVDRRTGRVVVLSAIDNLVKGASGQAVQNMNIICGLPEDTGLAGPGLYP</sequence>
<organism>
    <name type="scientific">Pelotomaculum thermopropionicum (strain DSM 13744 / JCM 10971 / SI)</name>
    <dbReference type="NCBI Taxonomy" id="370438"/>
    <lineage>
        <taxon>Bacteria</taxon>
        <taxon>Bacillati</taxon>
        <taxon>Bacillota</taxon>
        <taxon>Clostridia</taxon>
        <taxon>Eubacteriales</taxon>
        <taxon>Desulfotomaculaceae</taxon>
        <taxon>Pelotomaculum</taxon>
    </lineage>
</organism>
<comment type="function">
    <text evidence="1">Catalyzes the NADPH-dependent reduction of N-acetyl-5-glutamyl phosphate to yield N-acetyl-L-glutamate 5-semialdehyde.</text>
</comment>
<comment type="catalytic activity">
    <reaction evidence="1">
        <text>N-acetyl-L-glutamate 5-semialdehyde + phosphate + NADP(+) = N-acetyl-L-glutamyl 5-phosphate + NADPH + H(+)</text>
        <dbReference type="Rhea" id="RHEA:21588"/>
        <dbReference type="ChEBI" id="CHEBI:15378"/>
        <dbReference type="ChEBI" id="CHEBI:29123"/>
        <dbReference type="ChEBI" id="CHEBI:43474"/>
        <dbReference type="ChEBI" id="CHEBI:57783"/>
        <dbReference type="ChEBI" id="CHEBI:57936"/>
        <dbReference type="ChEBI" id="CHEBI:58349"/>
        <dbReference type="EC" id="1.2.1.38"/>
    </reaction>
</comment>
<comment type="pathway">
    <text evidence="1">Amino-acid biosynthesis; L-arginine biosynthesis; N(2)-acetyl-L-ornithine from L-glutamate: step 3/4.</text>
</comment>
<comment type="subcellular location">
    <subcellularLocation>
        <location evidence="1">Cytoplasm</location>
    </subcellularLocation>
</comment>
<comment type="similarity">
    <text evidence="1">Belongs to the NAGSA dehydrogenase family. Type 1 subfamily.</text>
</comment>
<feature type="chain" id="PRO_1000123249" description="N-acetyl-gamma-glutamyl-phosphate reductase">
    <location>
        <begin position="1"/>
        <end position="347"/>
    </location>
</feature>
<feature type="active site" evidence="1">
    <location>
        <position position="151"/>
    </location>
</feature>
<gene>
    <name evidence="1" type="primary">argC</name>
    <name type="ordered locus">PTH_0501</name>
</gene>
<keyword id="KW-0028">Amino-acid biosynthesis</keyword>
<keyword id="KW-0055">Arginine biosynthesis</keyword>
<keyword id="KW-0963">Cytoplasm</keyword>
<keyword id="KW-0521">NADP</keyword>
<keyword id="KW-0560">Oxidoreductase</keyword>
<keyword id="KW-1185">Reference proteome</keyword>
<proteinExistence type="inferred from homology"/>